<comment type="function">
    <text evidence="1">This protein binds to the 23S rRNA, and is important in its secondary structure. It is located near the subunit interface in the base of the L7/L12 stalk, and near the tRNA binding site of the peptidyltransferase center.</text>
</comment>
<comment type="subunit">
    <text evidence="1">Part of the 50S ribosomal subunit.</text>
</comment>
<comment type="similarity">
    <text evidence="1">Belongs to the universal ribosomal protein uL6 family.</text>
</comment>
<evidence type="ECO:0000255" key="1">
    <source>
        <dbReference type="HAMAP-Rule" id="MF_01365"/>
    </source>
</evidence>
<evidence type="ECO:0000305" key="2"/>
<reference key="1">
    <citation type="journal article" date="2008" name="Genome Res.">
        <title>The genome of Pelotomaculum thermopropionicum reveals niche-associated evolution in anaerobic microbiota.</title>
        <authorList>
            <person name="Kosaka T."/>
            <person name="Kato S."/>
            <person name="Shimoyama T."/>
            <person name="Ishii S."/>
            <person name="Abe T."/>
            <person name="Watanabe K."/>
        </authorList>
    </citation>
    <scope>NUCLEOTIDE SEQUENCE [LARGE SCALE GENOMIC DNA]</scope>
    <source>
        <strain>DSM 13744 / JCM 10971 / SI</strain>
    </source>
</reference>
<accession>A5D5G9</accession>
<keyword id="KW-1185">Reference proteome</keyword>
<keyword id="KW-0687">Ribonucleoprotein</keyword>
<keyword id="KW-0689">Ribosomal protein</keyword>
<keyword id="KW-0694">RNA-binding</keyword>
<keyword id="KW-0699">rRNA-binding</keyword>
<dbReference type="EMBL" id="AP009389">
    <property type="protein sequence ID" value="BAF58515.1"/>
    <property type="molecule type" value="Genomic_DNA"/>
</dbReference>
<dbReference type="SMR" id="A5D5G9"/>
<dbReference type="STRING" id="370438.PTH_0334"/>
<dbReference type="KEGG" id="pth:PTH_0334"/>
<dbReference type="eggNOG" id="COG0097">
    <property type="taxonomic scope" value="Bacteria"/>
</dbReference>
<dbReference type="HOGENOM" id="CLU_065464_1_2_9"/>
<dbReference type="Proteomes" id="UP000006556">
    <property type="component" value="Chromosome"/>
</dbReference>
<dbReference type="GO" id="GO:0022625">
    <property type="term" value="C:cytosolic large ribosomal subunit"/>
    <property type="evidence" value="ECO:0007669"/>
    <property type="project" value="TreeGrafter"/>
</dbReference>
<dbReference type="GO" id="GO:0019843">
    <property type="term" value="F:rRNA binding"/>
    <property type="evidence" value="ECO:0007669"/>
    <property type="project" value="UniProtKB-UniRule"/>
</dbReference>
<dbReference type="GO" id="GO:0003735">
    <property type="term" value="F:structural constituent of ribosome"/>
    <property type="evidence" value="ECO:0007669"/>
    <property type="project" value="InterPro"/>
</dbReference>
<dbReference type="GO" id="GO:0002181">
    <property type="term" value="P:cytoplasmic translation"/>
    <property type="evidence" value="ECO:0007669"/>
    <property type="project" value="TreeGrafter"/>
</dbReference>
<dbReference type="FunFam" id="3.90.930.12:FF:000001">
    <property type="entry name" value="50S ribosomal protein L6"/>
    <property type="match status" value="1"/>
</dbReference>
<dbReference type="FunFam" id="3.90.930.12:FF:000002">
    <property type="entry name" value="50S ribosomal protein L6"/>
    <property type="match status" value="1"/>
</dbReference>
<dbReference type="Gene3D" id="3.90.930.12">
    <property type="entry name" value="Ribosomal protein L6, alpha-beta domain"/>
    <property type="match status" value="2"/>
</dbReference>
<dbReference type="HAMAP" id="MF_01365_B">
    <property type="entry name" value="Ribosomal_uL6_B"/>
    <property type="match status" value="1"/>
</dbReference>
<dbReference type="InterPro" id="IPR000702">
    <property type="entry name" value="Ribosomal_uL6-like"/>
</dbReference>
<dbReference type="InterPro" id="IPR036789">
    <property type="entry name" value="Ribosomal_uL6-like_a/b-dom_sf"/>
</dbReference>
<dbReference type="InterPro" id="IPR020040">
    <property type="entry name" value="Ribosomal_uL6_a/b-dom"/>
</dbReference>
<dbReference type="InterPro" id="IPR019906">
    <property type="entry name" value="Ribosomal_uL6_bac-type"/>
</dbReference>
<dbReference type="InterPro" id="IPR002358">
    <property type="entry name" value="Ribosomal_uL6_CS"/>
</dbReference>
<dbReference type="NCBIfam" id="TIGR03654">
    <property type="entry name" value="L6_bact"/>
    <property type="match status" value="1"/>
</dbReference>
<dbReference type="PANTHER" id="PTHR11655">
    <property type="entry name" value="60S/50S RIBOSOMAL PROTEIN L6/L9"/>
    <property type="match status" value="1"/>
</dbReference>
<dbReference type="PANTHER" id="PTHR11655:SF14">
    <property type="entry name" value="LARGE RIBOSOMAL SUBUNIT PROTEIN UL6M"/>
    <property type="match status" value="1"/>
</dbReference>
<dbReference type="Pfam" id="PF00347">
    <property type="entry name" value="Ribosomal_L6"/>
    <property type="match status" value="2"/>
</dbReference>
<dbReference type="PIRSF" id="PIRSF002162">
    <property type="entry name" value="Ribosomal_L6"/>
    <property type="match status" value="1"/>
</dbReference>
<dbReference type="PRINTS" id="PR00059">
    <property type="entry name" value="RIBOSOMALL6"/>
</dbReference>
<dbReference type="SUPFAM" id="SSF56053">
    <property type="entry name" value="Ribosomal protein L6"/>
    <property type="match status" value="2"/>
</dbReference>
<dbReference type="PROSITE" id="PS00525">
    <property type="entry name" value="RIBOSOMAL_L6_1"/>
    <property type="match status" value="1"/>
</dbReference>
<proteinExistence type="inferred from homology"/>
<protein>
    <recommendedName>
        <fullName evidence="1">Large ribosomal subunit protein uL6</fullName>
    </recommendedName>
    <alternativeName>
        <fullName evidence="2">50S ribosomal protein L6</fullName>
    </alternativeName>
</protein>
<organism>
    <name type="scientific">Pelotomaculum thermopropionicum (strain DSM 13744 / JCM 10971 / SI)</name>
    <dbReference type="NCBI Taxonomy" id="370438"/>
    <lineage>
        <taxon>Bacteria</taxon>
        <taxon>Bacillati</taxon>
        <taxon>Bacillota</taxon>
        <taxon>Clostridia</taxon>
        <taxon>Eubacteriales</taxon>
        <taxon>Desulfotomaculaceae</taxon>
        <taxon>Pelotomaculum</taxon>
    </lineage>
</organism>
<sequence length="182" mass="19705">MSRIGRQPITVPAGVEVEIDGSTVKVKGPKGQLVKEMHRDMIIKYEDGRLIVERPANDKLHKSLHGLTRTLLNNMVVGVTAGFQKNLELVGVGYRASKQGNKLVLAVGYSHPVEIEPEAGLEIEVPAPTKISIKGVDKEKVGALAAAIRAVRQPEPYKGKGIKYEGEKIRRKVGKAGGKGKK</sequence>
<gene>
    <name evidence="1" type="primary">rplF</name>
    <name type="ordered locus">PTH_0334</name>
</gene>
<name>RL6_PELTS</name>
<feature type="chain" id="PRO_1000087053" description="Large ribosomal subunit protein uL6">
    <location>
        <begin position="1"/>
        <end position="182"/>
    </location>
</feature>